<organism>
    <name type="scientific">Salmonella heidelberg (strain SL476)</name>
    <dbReference type="NCBI Taxonomy" id="454169"/>
    <lineage>
        <taxon>Bacteria</taxon>
        <taxon>Pseudomonadati</taxon>
        <taxon>Pseudomonadota</taxon>
        <taxon>Gammaproteobacteria</taxon>
        <taxon>Enterobacterales</taxon>
        <taxon>Enterobacteriaceae</taxon>
        <taxon>Salmonella</taxon>
    </lineage>
</organism>
<comment type="cofactor">
    <cofactor evidence="1">
        <name>Zn(2+)</name>
        <dbReference type="ChEBI" id="CHEBI:29105"/>
    </cofactor>
    <text evidence="1">Binds 1 zinc ion per subunit.</text>
</comment>
<comment type="subcellular location">
    <subcellularLocation>
        <location evidence="1">Cell inner membrane</location>
        <topology evidence="1">Multi-pass membrane protein</topology>
    </subcellularLocation>
</comment>
<comment type="similarity">
    <text evidence="1">Belongs to the peptidase M48B family.</text>
</comment>
<gene>
    <name evidence="1" type="primary">htpX</name>
    <name type="ordered locus">SeHA_C2045</name>
</gene>
<sequence length="293" mass="31879">MMRIALFLLTNLAVMVVFGLVLSLTGIQSSSVQGLLIMALLFGFGGSFISLLMSKWMALKSVGGEVIEQPRNERERWLMNTVATQARQAGIAMPQVAIYHAPDINAFATGARRDASLVAVSTGLLQNMSPDEAEAVIAHEISHIANGDMVTMTLIQGVVNTFVIFISRIIAQIAAGFLGGNRDEGEGSNGNPLIYFAVATVLELVFGILASIITMWFSRYREFHADAGSAKLVGREKMIAALQRLKTSYEPQEATSMMAFCINGKSKSLSELFMTHPPLDKRIEALRSGEYLK</sequence>
<keyword id="KW-0997">Cell inner membrane</keyword>
<keyword id="KW-1003">Cell membrane</keyword>
<keyword id="KW-0378">Hydrolase</keyword>
<keyword id="KW-0472">Membrane</keyword>
<keyword id="KW-0479">Metal-binding</keyword>
<keyword id="KW-0482">Metalloprotease</keyword>
<keyword id="KW-0645">Protease</keyword>
<keyword id="KW-0812">Transmembrane</keyword>
<keyword id="KW-1133">Transmembrane helix</keyword>
<keyword id="KW-0862">Zinc</keyword>
<accession>B4TKH4</accession>
<protein>
    <recommendedName>
        <fullName evidence="1">Protease HtpX</fullName>
        <ecNumber evidence="1">3.4.24.-</ecNumber>
    </recommendedName>
    <alternativeName>
        <fullName evidence="1">Heat shock protein HtpX</fullName>
    </alternativeName>
</protein>
<evidence type="ECO:0000255" key="1">
    <source>
        <dbReference type="HAMAP-Rule" id="MF_00188"/>
    </source>
</evidence>
<name>HTPX_SALHS</name>
<feature type="chain" id="PRO_1000098843" description="Protease HtpX">
    <location>
        <begin position="1"/>
        <end position="293"/>
    </location>
</feature>
<feature type="transmembrane region" description="Helical" evidence="1">
    <location>
        <begin position="4"/>
        <end position="24"/>
    </location>
</feature>
<feature type="transmembrane region" description="Helical" evidence="1">
    <location>
        <begin position="34"/>
        <end position="54"/>
    </location>
</feature>
<feature type="transmembrane region" description="Helical" evidence="1">
    <location>
        <begin position="158"/>
        <end position="178"/>
    </location>
</feature>
<feature type="transmembrane region" description="Helical" evidence="1">
    <location>
        <begin position="193"/>
        <end position="213"/>
    </location>
</feature>
<feature type="active site" evidence="1">
    <location>
        <position position="140"/>
    </location>
</feature>
<feature type="binding site" evidence="1">
    <location>
        <position position="139"/>
    </location>
    <ligand>
        <name>Zn(2+)</name>
        <dbReference type="ChEBI" id="CHEBI:29105"/>
        <note>catalytic</note>
    </ligand>
</feature>
<feature type="binding site" evidence="1">
    <location>
        <position position="143"/>
    </location>
    <ligand>
        <name>Zn(2+)</name>
        <dbReference type="ChEBI" id="CHEBI:29105"/>
        <note>catalytic</note>
    </ligand>
</feature>
<feature type="binding site" evidence="1">
    <location>
        <position position="222"/>
    </location>
    <ligand>
        <name>Zn(2+)</name>
        <dbReference type="ChEBI" id="CHEBI:29105"/>
        <note>catalytic</note>
    </ligand>
</feature>
<reference key="1">
    <citation type="journal article" date="2011" name="J. Bacteriol.">
        <title>Comparative genomics of 28 Salmonella enterica isolates: evidence for CRISPR-mediated adaptive sublineage evolution.</title>
        <authorList>
            <person name="Fricke W.F."/>
            <person name="Mammel M.K."/>
            <person name="McDermott P.F."/>
            <person name="Tartera C."/>
            <person name="White D.G."/>
            <person name="Leclerc J.E."/>
            <person name="Ravel J."/>
            <person name="Cebula T.A."/>
        </authorList>
    </citation>
    <scope>NUCLEOTIDE SEQUENCE [LARGE SCALE GENOMIC DNA]</scope>
    <source>
        <strain>SL476</strain>
    </source>
</reference>
<proteinExistence type="inferred from homology"/>
<dbReference type="EC" id="3.4.24.-" evidence="1"/>
<dbReference type="EMBL" id="CP001120">
    <property type="protein sequence ID" value="ACF68922.1"/>
    <property type="molecule type" value="Genomic_DNA"/>
</dbReference>
<dbReference type="RefSeq" id="WP_000984498.1">
    <property type="nucleotide sequence ID" value="NC_011083.1"/>
</dbReference>
<dbReference type="SMR" id="B4TKH4"/>
<dbReference type="MEROPS" id="M48.002"/>
<dbReference type="GeneID" id="66756319"/>
<dbReference type="KEGG" id="seh:SeHA_C2045"/>
<dbReference type="HOGENOM" id="CLU_042266_1_0_6"/>
<dbReference type="Proteomes" id="UP000001866">
    <property type="component" value="Chromosome"/>
</dbReference>
<dbReference type="GO" id="GO:0005886">
    <property type="term" value="C:plasma membrane"/>
    <property type="evidence" value="ECO:0007669"/>
    <property type="project" value="UniProtKB-SubCell"/>
</dbReference>
<dbReference type="GO" id="GO:0004222">
    <property type="term" value="F:metalloendopeptidase activity"/>
    <property type="evidence" value="ECO:0007669"/>
    <property type="project" value="UniProtKB-UniRule"/>
</dbReference>
<dbReference type="GO" id="GO:0008270">
    <property type="term" value="F:zinc ion binding"/>
    <property type="evidence" value="ECO:0007669"/>
    <property type="project" value="UniProtKB-UniRule"/>
</dbReference>
<dbReference type="GO" id="GO:0006508">
    <property type="term" value="P:proteolysis"/>
    <property type="evidence" value="ECO:0007669"/>
    <property type="project" value="UniProtKB-KW"/>
</dbReference>
<dbReference type="CDD" id="cd07335">
    <property type="entry name" value="M48B_HtpX_like"/>
    <property type="match status" value="1"/>
</dbReference>
<dbReference type="FunFam" id="3.30.2010.10:FF:000001">
    <property type="entry name" value="Protease HtpX"/>
    <property type="match status" value="1"/>
</dbReference>
<dbReference type="Gene3D" id="3.30.2010.10">
    <property type="entry name" value="Metalloproteases ('zincins'), catalytic domain"/>
    <property type="match status" value="1"/>
</dbReference>
<dbReference type="HAMAP" id="MF_00188">
    <property type="entry name" value="Pept_M48_protease_HtpX"/>
    <property type="match status" value="1"/>
</dbReference>
<dbReference type="InterPro" id="IPR050083">
    <property type="entry name" value="HtpX_protease"/>
</dbReference>
<dbReference type="InterPro" id="IPR022919">
    <property type="entry name" value="Pept_M48_protease_HtpX"/>
</dbReference>
<dbReference type="InterPro" id="IPR001915">
    <property type="entry name" value="Peptidase_M48"/>
</dbReference>
<dbReference type="NCBIfam" id="NF003965">
    <property type="entry name" value="PRK05457.1"/>
    <property type="match status" value="1"/>
</dbReference>
<dbReference type="PANTHER" id="PTHR43221">
    <property type="entry name" value="PROTEASE HTPX"/>
    <property type="match status" value="1"/>
</dbReference>
<dbReference type="PANTHER" id="PTHR43221:SF1">
    <property type="entry name" value="PROTEASE HTPX"/>
    <property type="match status" value="1"/>
</dbReference>
<dbReference type="Pfam" id="PF01435">
    <property type="entry name" value="Peptidase_M48"/>
    <property type="match status" value="1"/>
</dbReference>